<dbReference type="EC" id="4.3.3.7" evidence="1"/>
<dbReference type="EMBL" id="CP001127">
    <property type="protein sequence ID" value="ACF92869.1"/>
    <property type="molecule type" value="Genomic_DNA"/>
</dbReference>
<dbReference type="RefSeq" id="WP_000494020.1">
    <property type="nucleotide sequence ID" value="NC_011094.1"/>
</dbReference>
<dbReference type="SMR" id="B4TR62"/>
<dbReference type="KEGG" id="sew:SeSA_A2723"/>
<dbReference type="HOGENOM" id="CLU_049343_7_1_6"/>
<dbReference type="UniPathway" id="UPA00034">
    <property type="reaction ID" value="UER00017"/>
</dbReference>
<dbReference type="Proteomes" id="UP000001865">
    <property type="component" value="Chromosome"/>
</dbReference>
<dbReference type="GO" id="GO:0005829">
    <property type="term" value="C:cytosol"/>
    <property type="evidence" value="ECO:0007669"/>
    <property type="project" value="TreeGrafter"/>
</dbReference>
<dbReference type="GO" id="GO:0008840">
    <property type="term" value="F:4-hydroxy-tetrahydrodipicolinate synthase activity"/>
    <property type="evidence" value="ECO:0007669"/>
    <property type="project" value="UniProtKB-UniRule"/>
</dbReference>
<dbReference type="GO" id="GO:0019877">
    <property type="term" value="P:diaminopimelate biosynthetic process"/>
    <property type="evidence" value="ECO:0007669"/>
    <property type="project" value="UniProtKB-UniRule"/>
</dbReference>
<dbReference type="GO" id="GO:0009089">
    <property type="term" value="P:lysine biosynthetic process via diaminopimelate"/>
    <property type="evidence" value="ECO:0007669"/>
    <property type="project" value="UniProtKB-UniRule"/>
</dbReference>
<dbReference type="CDD" id="cd00950">
    <property type="entry name" value="DHDPS"/>
    <property type="match status" value="1"/>
</dbReference>
<dbReference type="FunFam" id="3.20.20.70:FF:000046">
    <property type="entry name" value="4-hydroxy-tetrahydrodipicolinate synthase"/>
    <property type="match status" value="1"/>
</dbReference>
<dbReference type="Gene3D" id="3.20.20.70">
    <property type="entry name" value="Aldolase class I"/>
    <property type="match status" value="1"/>
</dbReference>
<dbReference type="HAMAP" id="MF_00418">
    <property type="entry name" value="DapA"/>
    <property type="match status" value="1"/>
</dbReference>
<dbReference type="InterPro" id="IPR013785">
    <property type="entry name" value="Aldolase_TIM"/>
</dbReference>
<dbReference type="InterPro" id="IPR005263">
    <property type="entry name" value="DapA"/>
</dbReference>
<dbReference type="InterPro" id="IPR002220">
    <property type="entry name" value="DapA-like"/>
</dbReference>
<dbReference type="InterPro" id="IPR020625">
    <property type="entry name" value="Schiff_base-form_aldolases_AS"/>
</dbReference>
<dbReference type="InterPro" id="IPR020624">
    <property type="entry name" value="Schiff_base-form_aldolases_CS"/>
</dbReference>
<dbReference type="NCBIfam" id="TIGR00674">
    <property type="entry name" value="dapA"/>
    <property type="match status" value="1"/>
</dbReference>
<dbReference type="PANTHER" id="PTHR12128:SF66">
    <property type="entry name" value="4-HYDROXY-2-OXOGLUTARATE ALDOLASE, MITOCHONDRIAL"/>
    <property type="match status" value="1"/>
</dbReference>
<dbReference type="PANTHER" id="PTHR12128">
    <property type="entry name" value="DIHYDRODIPICOLINATE SYNTHASE"/>
    <property type="match status" value="1"/>
</dbReference>
<dbReference type="Pfam" id="PF00701">
    <property type="entry name" value="DHDPS"/>
    <property type="match status" value="1"/>
</dbReference>
<dbReference type="PIRSF" id="PIRSF001365">
    <property type="entry name" value="DHDPS"/>
    <property type="match status" value="1"/>
</dbReference>
<dbReference type="PRINTS" id="PR00146">
    <property type="entry name" value="DHPICSNTHASE"/>
</dbReference>
<dbReference type="SMART" id="SM01130">
    <property type="entry name" value="DHDPS"/>
    <property type="match status" value="1"/>
</dbReference>
<dbReference type="SUPFAM" id="SSF51569">
    <property type="entry name" value="Aldolase"/>
    <property type="match status" value="1"/>
</dbReference>
<dbReference type="PROSITE" id="PS00665">
    <property type="entry name" value="DHDPS_1"/>
    <property type="match status" value="1"/>
</dbReference>
<dbReference type="PROSITE" id="PS00666">
    <property type="entry name" value="DHDPS_2"/>
    <property type="match status" value="1"/>
</dbReference>
<gene>
    <name evidence="1" type="primary">dapA</name>
    <name type="ordered locus">SeSA_A2723</name>
</gene>
<protein>
    <recommendedName>
        <fullName evidence="1">4-hydroxy-tetrahydrodipicolinate synthase</fullName>
        <shortName evidence="1">HTPA synthase</shortName>
        <ecNumber evidence="1">4.3.3.7</ecNumber>
    </recommendedName>
</protein>
<sequence length="292" mass="31294">MFTGSIVALVTPMDEKGNVSRSCLKKLIDYHVANGTSAIVSVGTTGESATLSHDEHGDVVMMTLELADGRIPVIAGTGANATAEAISLTQRFNDSGIVGCLTVTPYYNRPTQEGLFQHFKAIAEHTDLPQILYNVPSRTGCDMLPETVGRLAEIKNIIAIKEATGNLTRVHQIKELVSDDFILLSGDDASALDFMQLGGHGVISVTANVAAREMADMCKLAAEGQFAEARAINQRLMPLHNKLFVEPNPIPVKWACKALGLVATDTLRLPMTPITDHGRDIVKAALQHAGLL</sequence>
<keyword id="KW-0028">Amino-acid biosynthesis</keyword>
<keyword id="KW-0963">Cytoplasm</keyword>
<keyword id="KW-0220">Diaminopimelate biosynthesis</keyword>
<keyword id="KW-0456">Lyase</keyword>
<keyword id="KW-0457">Lysine biosynthesis</keyword>
<keyword id="KW-0704">Schiff base</keyword>
<evidence type="ECO:0000255" key="1">
    <source>
        <dbReference type="HAMAP-Rule" id="MF_00418"/>
    </source>
</evidence>
<evidence type="ECO:0000305" key="2"/>
<reference key="1">
    <citation type="journal article" date="2011" name="J. Bacteriol.">
        <title>Comparative genomics of 28 Salmonella enterica isolates: evidence for CRISPR-mediated adaptive sublineage evolution.</title>
        <authorList>
            <person name="Fricke W.F."/>
            <person name="Mammel M.K."/>
            <person name="McDermott P.F."/>
            <person name="Tartera C."/>
            <person name="White D.G."/>
            <person name="Leclerc J.E."/>
            <person name="Ravel J."/>
            <person name="Cebula T.A."/>
        </authorList>
    </citation>
    <scope>NUCLEOTIDE SEQUENCE [LARGE SCALE GENOMIC DNA]</scope>
    <source>
        <strain>CVM19633</strain>
    </source>
</reference>
<comment type="function">
    <text evidence="1">Catalyzes the condensation of (S)-aspartate-beta-semialdehyde [(S)-ASA] and pyruvate to 4-hydroxy-tetrahydrodipicolinate (HTPA).</text>
</comment>
<comment type="catalytic activity">
    <reaction evidence="1">
        <text>L-aspartate 4-semialdehyde + pyruvate = (2S,4S)-4-hydroxy-2,3,4,5-tetrahydrodipicolinate + H2O + H(+)</text>
        <dbReference type="Rhea" id="RHEA:34171"/>
        <dbReference type="ChEBI" id="CHEBI:15361"/>
        <dbReference type="ChEBI" id="CHEBI:15377"/>
        <dbReference type="ChEBI" id="CHEBI:15378"/>
        <dbReference type="ChEBI" id="CHEBI:67139"/>
        <dbReference type="ChEBI" id="CHEBI:537519"/>
        <dbReference type="EC" id="4.3.3.7"/>
    </reaction>
</comment>
<comment type="pathway">
    <text evidence="1">Amino-acid biosynthesis; L-lysine biosynthesis via DAP pathway; (S)-tetrahydrodipicolinate from L-aspartate: step 3/4.</text>
</comment>
<comment type="subunit">
    <text evidence="1">Homotetramer; dimer of dimers.</text>
</comment>
<comment type="subcellular location">
    <subcellularLocation>
        <location evidence="1">Cytoplasm</location>
    </subcellularLocation>
</comment>
<comment type="similarity">
    <text evidence="1">Belongs to the DapA family.</text>
</comment>
<comment type="caution">
    <text evidence="2">Was originally thought to be a dihydrodipicolinate synthase (DHDPS), catalyzing the condensation of (S)-aspartate-beta-semialdehyde [(S)-ASA] and pyruvate to dihydrodipicolinate (DHDP). However, it was shown in E.coli that the product of the enzymatic reaction is not dihydrodipicolinate but in fact (4S)-4-hydroxy-2,3,4,5-tetrahydro-(2S)-dipicolinic acid (HTPA), and that the consecutive dehydration reaction leading to DHDP is not spontaneous but catalyzed by DapB.</text>
</comment>
<name>DAPA_SALSV</name>
<organism>
    <name type="scientific">Salmonella schwarzengrund (strain CVM19633)</name>
    <dbReference type="NCBI Taxonomy" id="439843"/>
    <lineage>
        <taxon>Bacteria</taxon>
        <taxon>Pseudomonadati</taxon>
        <taxon>Pseudomonadota</taxon>
        <taxon>Gammaproteobacteria</taxon>
        <taxon>Enterobacterales</taxon>
        <taxon>Enterobacteriaceae</taxon>
        <taxon>Salmonella</taxon>
    </lineage>
</organism>
<feature type="chain" id="PRO_1000124063" description="4-hydroxy-tetrahydrodipicolinate synthase">
    <location>
        <begin position="1"/>
        <end position="292"/>
    </location>
</feature>
<feature type="active site" description="Proton donor/acceptor" evidence="1">
    <location>
        <position position="133"/>
    </location>
</feature>
<feature type="active site" description="Schiff-base intermediate with substrate" evidence="1">
    <location>
        <position position="161"/>
    </location>
</feature>
<feature type="binding site" evidence="1">
    <location>
        <position position="45"/>
    </location>
    <ligand>
        <name>pyruvate</name>
        <dbReference type="ChEBI" id="CHEBI:15361"/>
    </ligand>
</feature>
<feature type="binding site" evidence="1">
    <location>
        <position position="203"/>
    </location>
    <ligand>
        <name>pyruvate</name>
        <dbReference type="ChEBI" id="CHEBI:15361"/>
    </ligand>
</feature>
<feature type="site" description="Part of a proton relay during catalysis" evidence="1">
    <location>
        <position position="44"/>
    </location>
</feature>
<feature type="site" description="Part of a proton relay during catalysis" evidence="1">
    <location>
        <position position="107"/>
    </location>
</feature>
<proteinExistence type="inferred from homology"/>
<accession>B4TR62</accession>